<accession>Q6LMG5</accession>
<organism>
    <name type="scientific">Photobacterium profundum (strain SS9)</name>
    <dbReference type="NCBI Taxonomy" id="298386"/>
    <lineage>
        <taxon>Bacteria</taxon>
        <taxon>Pseudomonadati</taxon>
        <taxon>Pseudomonadota</taxon>
        <taxon>Gammaproteobacteria</taxon>
        <taxon>Vibrionales</taxon>
        <taxon>Vibrionaceae</taxon>
        <taxon>Photobacterium</taxon>
    </lineage>
</organism>
<keyword id="KW-0479">Metal-binding</keyword>
<keyword id="KW-1185">Reference proteome</keyword>
<keyword id="KW-0862">Zinc</keyword>
<reference key="1">
    <citation type="journal article" date="2005" name="Science">
        <title>Life at depth: Photobacterium profundum genome sequence and expression analysis.</title>
        <authorList>
            <person name="Vezzi A."/>
            <person name="Campanaro S."/>
            <person name="D'Angelo M."/>
            <person name="Simonato F."/>
            <person name="Vitulo N."/>
            <person name="Lauro F.M."/>
            <person name="Cestaro A."/>
            <person name="Malacrida G."/>
            <person name="Simionati B."/>
            <person name="Cannata N."/>
            <person name="Romualdi C."/>
            <person name="Bartlett D.H."/>
            <person name="Valle G."/>
        </authorList>
    </citation>
    <scope>NUCLEOTIDE SEQUENCE [LARGE SCALE GENOMIC DNA]</scope>
    <source>
        <strain>ATCC BAA-1253 / SS9</strain>
    </source>
</reference>
<sequence length="76" mass="8563">MLRLPVSQSNTPTTPIIVKCPTCKKEVEWGEQSPYRPFCTKRCQLIDLGEWAEEEKSIPGAPDLSDSDGWSDDMGY</sequence>
<gene>
    <name evidence="1" type="primary">yacG</name>
    <name type="ordered locus">PBPRA3206</name>
</gene>
<comment type="function">
    <text evidence="1">Inhibits all the catalytic activities of DNA gyrase by preventing its interaction with DNA. Acts by binding directly to the C-terminal domain of GyrB, which probably disrupts DNA binding by the gyrase.</text>
</comment>
<comment type="cofactor">
    <cofactor evidence="1">
        <name>Zn(2+)</name>
        <dbReference type="ChEBI" id="CHEBI:29105"/>
    </cofactor>
    <text evidence="1">Binds 1 zinc ion.</text>
</comment>
<comment type="subunit">
    <text evidence="1">Interacts with GyrB.</text>
</comment>
<comment type="similarity">
    <text evidence="1">Belongs to the DNA gyrase inhibitor YacG family.</text>
</comment>
<feature type="chain" id="PRO_0000211714" description="DNA gyrase inhibitor YacG">
    <location>
        <begin position="1"/>
        <end position="76"/>
    </location>
</feature>
<feature type="region of interest" description="Disordered" evidence="2">
    <location>
        <begin position="54"/>
        <end position="76"/>
    </location>
</feature>
<feature type="compositionally biased region" description="Acidic residues" evidence="2">
    <location>
        <begin position="65"/>
        <end position="76"/>
    </location>
</feature>
<feature type="binding site" evidence="1">
    <location>
        <position position="20"/>
    </location>
    <ligand>
        <name>Zn(2+)</name>
        <dbReference type="ChEBI" id="CHEBI:29105"/>
    </ligand>
</feature>
<feature type="binding site" evidence="1">
    <location>
        <position position="23"/>
    </location>
    <ligand>
        <name>Zn(2+)</name>
        <dbReference type="ChEBI" id="CHEBI:29105"/>
    </ligand>
</feature>
<feature type="binding site" evidence="1">
    <location>
        <position position="39"/>
    </location>
    <ligand>
        <name>Zn(2+)</name>
        <dbReference type="ChEBI" id="CHEBI:29105"/>
    </ligand>
</feature>
<feature type="binding site" evidence="1">
    <location>
        <position position="43"/>
    </location>
    <ligand>
        <name>Zn(2+)</name>
        <dbReference type="ChEBI" id="CHEBI:29105"/>
    </ligand>
</feature>
<protein>
    <recommendedName>
        <fullName evidence="1">DNA gyrase inhibitor YacG</fullName>
    </recommendedName>
</protein>
<dbReference type="EMBL" id="CR378673">
    <property type="protein sequence ID" value="CAG21512.1"/>
    <property type="molecule type" value="Genomic_DNA"/>
</dbReference>
<dbReference type="SMR" id="Q6LMG5"/>
<dbReference type="STRING" id="298386.PBPRA3206"/>
<dbReference type="KEGG" id="ppr:PBPRA3206"/>
<dbReference type="eggNOG" id="COG3024">
    <property type="taxonomic scope" value="Bacteria"/>
</dbReference>
<dbReference type="HOGENOM" id="CLU_178280_3_1_6"/>
<dbReference type="Proteomes" id="UP000000593">
    <property type="component" value="Chromosome 1"/>
</dbReference>
<dbReference type="GO" id="GO:0008657">
    <property type="term" value="F:DNA topoisomerase type II (double strand cut, ATP-hydrolyzing) inhibitor activity"/>
    <property type="evidence" value="ECO:0007669"/>
    <property type="project" value="UniProtKB-UniRule"/>
</dbReference>
<dbReference type="GO" id="GO:0008270">
    <property type="term" value="F:zinc ion binding"/>
    <property type="evidence" value="ECO:0007669"/>
    <property type="project" value="UniProtKB-UniRule"/>
</dbReference>
<dbReference type="GO" id="GO:0006355">
    <property type="term" value="P:regulation of DNA-templated transcription"/>
    <property type="evidence" value="ECO:0007669"/>
    <property type="project" value="InterPro"/>
</dbReference>
<dbReference type="Gene3D" id="3.30.50.10">
    <property type="entry name" value="Erythroid Transcription Factor GATA-1, subunit A"/>
    <property type="match status" value="1"/>
</dbReference>
<dbReference type="HAMAP" id="MF_00649">
    <property type="entry name" value="DNA_gyrase_inhibitor_YacG"/>
    <property type="match status" value="1"/>
</dbReference>
<dbReference type="InterPro" id="IPR005584">
    <property type="entry name" value="DNA_gyrase_inhibitor_YacG"/>
</dbReference>
<dbReference type="InterPro" id="IPR013088">
    <property type="entry name" value="Znf_NHR/GATA"/>
</dbReference>
<dbReference type="NCBIfam" id="NF001638">
    <property type="entry name" value="PRK00418.1"/>
    <property type="match status" value="1"/>
</dbReference>
<dbReference type="PANTHER" id="PTHR36150">
    <property type="entry name" value="DNA GYRASE INHIBITOR YACG"/>
    <property type="match status" value="1"/>
</dbReference>
<dbReference type="PANTHER" id="PTHR36150:SF1">
    <property type="entry name" value="DNA GYRASE INHIBITOR YACG"/>
    <property type="match status" value="1"/>
</dbReference>
<dbReference type="Pfam" id="PF03884">
    <property type="entry name" value="YacG"/>
    <property type="match status" value="1"/>
</dbReference>
<dbReference type="SUPFAM" id="SSF57716">
    <property type="entry name" value="Glucocorticoid receptor-like (DNA-binding domain)"/>
    <property type="match status" value="1"/>
</dbReference>
<proteinExistence type="inferred from homology"/>
<name>YACG_PHOPR</name>
<evidence type="ECO:0000255" key="1">
    <source>
        <dbReference type="HAMAP-Rule" id="MF_00649"/>
    </source>
</evidence>
<evidence type="ECO:0000256" key="2">
    <source>
        <dbReference type="SAM" id="MobiDB-lite"/>
    </source>
</evidence>